<gene>
    <name type="primary">mnhE1</name>
    <name type="ordered locus">SAHV_0943</name>
</gene>
<proteinExistence type="inferred from homology"/>
<name>MNHE1_STAA1</name>
<organism>
    <name type="scientific">Staphylococcus aureus (strain Mu3 / ATCC 700698)</name>
    <dbReference type="NCBI Taxonomy" id="418127"/>
    <lineage>
        <taxon>Bacteria</taxon>
        <taxon>Bacillati</taxon>
        <taxon>Bacillota</taxon>
        <taxon>Bacilli</taxon>
        <taxon>Bacillales</taxon>
        <taxon>Staphylococcaceae</taxon>
        <taxon>Staphylococcus</taxon>
    </lineage>
</organism>
<dbReference type="EMBL" id="AP009324">
    <property type="protein sequence ID" value="BAF77826.1"/>
    <property type="molecule type" value="Genomic_DNA"/>
</dbReference>
<dbReference type="RefSeq" id="WP_000290674.1">
    <property type="nucleotide sequence ID" value="NZ_CTYB01000024.1"/>
</dbReference>
<dbReference type="SMR" id="A7X0F8"/>
<dbReference type="KEGG" id="saw:SAHV_0943"/>
<dbReference type="HOGENOM" id="CLU_086615_3_2_9"/>
<dbReference type="GO" id="GO:0005886">
    <property type="term" value="C:plasma membrane"/>
    <property type="evidence" value="ECO:0007669"/>
    <property type="project" value="UniProtKB-SubCell"/>
</dbReference>
<dbReference type="GO" id="GO:0015297">
    <property type="term" value="F:antiporter activity"/>
    <property type="evidence" value="ECO:0007669"/>
    <property type="project" value="UniProtKB-KW"/>
</dbReference>
<dbReference type="GO" id="GO:0008324">
    <property type="term" value="F:monoatomic cation transmembrane transporter activity"/>
    <property type="evidence" value="ECO:0007669"/>
    <property type="project" value="InterPro"/>
</dbReference>
<dbReference type="GO" id="GO:1902600">
    <property type="term" value="P:proton transmembrane transport"/>
    <property type="evidence" value="ECO:0007669"/>
    <property type="project" value="UniProtKB-KW"/>
</dbReference>
<dbReference type="GO" id="GO:0006814">
    <property type="term" value="P:sodium ion transport"/>
    <property type="evidence" value="ECO:0007669"/>
    <property type="project" value="UniProtKB-KW"/>
</dbReference>
<dbReference type="InterPro" id="IPR004847">
    <property type="entry name" value="Antiport_suE1"/>
</dbReference>
<dbReference type="InterPro" id="IPR002758">
    <property type="entry name" value="Cation_antiport_E"/>
</dbReference>
<dbReference type="NCBIfam" id="TIGR00942">
    <property type="entry name" value="2a6301s05"/>
    <property type="match status" value="1"/>
</dbReference>
<dbReference type="NCBIfam" id="NF009291">
    <property type="entry name" value="PRK12651.1-1"/>
    <property type="match status" value="1"/>
</dbReference>
<dbReference type="PANTHER" id="PTHR34584">
    <property type="entry name" value="NA(+)/H(+) ANTIPORTER SUBUNIT E1"/>
    <property type="match status" value="1"/>
</dbReference>
<dbReference type="PANTHER" id="PTHR34584:SF1">
    <property type="entry name" value="NA(+)_H(+) ANTIPORTER SUBUNIT E1"/>
    <property type="match status" value="1"/>
</dbReference>
<dbReference type="Pfam" id="PF01899">
    <property type="entry name" value="MNHE"/>
    <property type="match status" value="1"/>
</dbReference>
<dbReference type="PIRSF" id="PIRSF019239">
    <property type="entry name" value="MrpE"/>
    <property type="match status" value="1"/>
</dbReference>
<comment type="function">
    <text evidence="1">Mnh complex is a Na(+)/H(+) antiporter involved in Na(+) excretion.</text>
</comment>
<comment type="subunit">
    <text evidence="1">May form a heterooligomeric complex that consists of seven subunits: mnhA1, mnhB1, mnhC1, mnhD1, mnhE1, mnhF1 and mnhG1.</text>
</comment>
<comment type="subcellular location">
    <subcellularLocation>
        <location evidence="3">Cell membrane</location>
        <topology evidence="3">Multi-pass membrane protein</topology>
    </subcellularLocation>
</comment>
<comment type="similarity">
    <text evidence="3">Belongs to the CPA3 antiporters (TC 2.A.63) subunit E family.</text>
</comment>
<keyword id="KW-0050">Antiport</keyword>
<keyword id="KW-1003">Cell membrane</keyword>
<keyword id="KW-0375">Hydrogen ion transport</keyword>
<keyword id="KW-0406">Ion transport</keyword>
<keyword id="KW-0472">Membrane</keyword>
<keyword id="KW-0915">Sodium</keyword>
<keyword id="KW-0739">Sodium transport</keyword>
<keyword id="KW-0812">Transmembrane</keyword>
<keyword id="KW-1133">Transmembrane helix</keyword>
<keyword id="KW-0813">Transport</keyword>
<sequence>MAVQLVLNFIIAVFWLFVTNSYTTNNFVLGFIFGLVLVYLLHRVLPGRFYVITLYRIIKLVIIFLIELIKANFDVLKIIIKPSIKNEPGFFVYHTDLKKDWQIVLLSNLITLTPGTVVLGVSDDRTKIYIHAIDFSTKEQEVESIKTSLEKIVREVGEI</sequence>
<reference key="1">
    <citation type="journal article" date="2008" name="Antimicrob. Agents Chemother.">
        <title>Mutated response regulator graR is responsible for phenotypic conversion of Staphylococcus aureus from heterogeneous vancomycin-intermediate resistance to vancomycin-intermediate resistance.</title>
        <authorList>
            <person name="Neoh H.-M."/>
            <person name="Cui L."/>
            <person name="Yuzawa H."/>
            <person name="Takeuchi F."/>
            <person name="Matsuo M."/>
            <person name="Hiramatsu K."/>
        </authorList>
    </citation>
    <scope>NUCLEOTIDE SEQUENCE [LARGE SCALE GENOMIC DNA]</scope>
    <source>
        <strain>Mu3 / ATCC 700698</strain>
    </source>
</reference>
<evidence type="ECO:0000250" key="1"/>
<evidence type="ECO:0000255" key="2"/>
<evidence type="ECO:0000305" key="3"/>
<accession>A7X0F8</accession>
<protein>
    <recommendedName>
        <fullName>Na(+)/H(+) antiporter subunit E1</fullName>
    </recommendedName>
    <alternativeName>
        <fullName>Mnh complex subunit E1</fullName>
    </alternativeName>
</protein>
<feature type="chain" id="PRO_0000372144" description="Na(+)/H(+) antiporter subunit E1">
    <location>
        <begin position="1"/>
        <end position="159"/>
    </location>
</feature>
<feature type="transmembrane region" description="Helical" evidence="2">
    <location>
        <begin position="1"/>
        <end position="21"/>
    </location>
</feature>
<feature type="transmembrane region" description="Helical" evidence="2">
    <location>
        <begin position="27"/>
        <end position="47"/>
    </location>
</feature>
<feature type="transmembrane region" description="Helical" evidence="2">
    <location>
        <begin position="49"/>
        <end position="69"/>
    </location>
</feature>
<feature type="transmembrane region" description="Helical" evidence="2">
    <location>
        <begin position="101"/>
        <end position="121"/>
    </location>
</feature>